<accession>P68481</accession>
<accession>P04307</accession>
<dbReference type="EMBL" id="M35027">
    <property type="protein sequence ID" value="AAA48104.1"/>
    <property type="molecule type" value="Genomic_DNA"/>
</dbReference>
<dbReference type="PIR" id="A03881">
    <property type="entry name" value="QQVZ10"/>
</dbReference>
<dbReference type="Proteomes" id="UP000008269">
    <property type="component" value="Segment"/>
</dbReference>
<feature type="chain" id="PRO_0000099692" description="Uncharacterized 9.3 kDa protein">
    <location>
        <begin position="1"/>
        <end position="80"/>
    </location>
</feature>
<organism>
    <name type="scientific">Vaccinia virus (strain Copenhagen)</name>
    <name type="common">VACV</name>
    <dbReference type="NCBI Taxonomy" id="10249"/>
    <lineage>
        <taxon>Viruses</taxon>
        <taxon>Varidnaviria</taxon>
        <taxon>Bamfordvirae</taxon>
        <taxon>Nucleocytoviricota</taxon>
        <taxon>Pokkesviricetes</taxon>
        <taxon>Chitovirales</taxon>
        <taxon>Poxviridae</taxon>
        <taxon>Chordopoxvirinae</taxon>
        <taxon>Orthopoxvirus</taxon>
        <taxon>Vaccinia virus</taxon>
    </lineage>
</organism>
<keyword id="KW-1185">Reference proteome</keyword>
<organismHost>
    <name type="scientific">Homo sapiens</name>
    <name type="common">Human</name>
    <dbReference type="NCBI Taxonomy" id="9606"/>
</organismHost>
<proteinExistence type="predicted"/>
<reference key="1">
    <citation type="journal article" date="1990" name="Virology">
        <title>The complete DNA sequence of vaccinia virus.</title>
        <authorList>
            <person name="Goebel S.J."/>
            <person name="Johnson G.P."/>
            <person name="Perkus M.E."/>
            <person name="Davis S.W."/>
            <person name="Winslow J.P."/>
            <person name="Paoletti E."/>
        </authorList>
    </citation>
    <scope>NUCLEOTIDE SEQUENCE [LARGE SCALE GENOMIC DNA]</scope>
</reference>
<reference key="2">
    <citation type="journal article" date="1990" name="Virology">
        <title>Appendix to 'The complete DNA sequence of vaccinia virus'.</title>
        <authorList>
            <person name="Goebel S.J."/>
            <person name="Johnson G.P."/>
            <person name="Perkus M.E."/>
            <person name="Davis S.W."/>
            <person name="Winslow J.P."/>
            <person name="Paoletti E."/>
        </authorList>
    </citation>
    <scope>COMPLETE GENOME</scope>
</reference>
<gene>
    <name type="ORF">D ORF E</name>
</gene>
<name>YVDE_VACCC</name>
<sequence>MNIYCRYSSLTLANFLCLLMKLSISCPNSLELKYLDIFCWKVVNGRVTTLSYNIYPFLERSVINGICFTELDTNRVPILR</sequence>
<protein>
    <recommendedName>
        <fullName>Uncharacterized 9.3 kDa protein</fullName>
    </recommendedName>
</protein>